<dbReference type="EC" id="6.1.1.-" evidence="1"/>
<dbReference type="EMBL" id="CP000826">
    <property type="protein sequence ID" value="ABV43081.1"/>
    <property type="molecule type" value="Genomic_DNA"/>
</dbReference>
<dbReference type="SMR" id="A8GIZ1"/>
<dbReference type="STRING" id="399741.Spro_3986"/>
<dbReference type="KEGG" id="spe:Spro_3986"/>
<dbReference type="eggNOG" id="COG0008">
    <property type="taxonomic scope" value="Bacteria"/>
</dbReference>
<dbReference type="HOGENOM" id="CLU_015768_0_1_6"/>
<dbReference type="OrthoDB" id="9807503at2"/>
<dbReference type="GO" id="GO:0005829">
    <property type="term" value="C:cytosol"/>
    <property type="evidence" value="ECO:0007669"/>
    <property type="project" value="TreeGrafter"/>
</dbReference>
<dbReference type="GO" id="GO:0005524">
    <property type="term" value="F:ATP binding"/>
    <property type="evidence" value="ECO:0007669"/>
    <property type="project" value="UniProtKB-KW"/>
</dbReference>
<dbReference type="GO" id="GO:0004818">
    <property type="term" value="F:glutamate-tRNA ligase activity"/>
    <property type="evidence" value="ECO:0007669"/>
    <property type="project" value="TreeGrafter"/>
</dbReference>
<dbReference type="GO" id="GO:0008270">
    <property type="term" value="F:zinc ion binding"/>
    <property type="evidence" value="ECO:0007669"/>
    <property type="project" value="UniProtKB-UniRule"/>
</dbReference>
<dbReference type="GO" id="GO:0006424">
    <property type="term" value="P:glutamyl-tRNA aminoacylation"/>
    <property type="evidence" value="ECO:0007669"/>
    <property type="project" value="InterPro"/>
</dbReference>
<dbReference type="GO" id="GO:0006400">
    <property type="term" value="P:tRNA modification"/>
    <property type="evidence" value="ECO:0007669"/>
    <property type="project" value="InterPro"/>
</dbReference>
<dbReference type="FunFam" id="3.40.50.620:FF:000093">
    <property type="entry name" value="Glutamyl-Q tRNA(Asp) synthetase"/>
    <property type="match status" value="1"/>
</dbReference>
<dbReference type="Gene3D" id="3.40.50.620">
    <property type="entry name" value="HUPs"/>
    <property type="match status" value="1"/>
</dbReference>
<dbReference type="HAMAP" id="MF_01428">
    <property type="entry name" value="Glu_Q_tRNA_synth"/>
    <property type="match status" value="1"/>
</dbReference>
<dbReference type="InterPro" id="IPR022380">
    <property type="entry name" value="Glu-Q_tRNA(Asp)_Synthase"/>
</dbReference>
<dbReference type="InterPro" id="IPR000924">
    <property type="entry name" value="Glu/Gln-tRNA-synth"/>
</dbReference>
<dbReference type="InterPro" id="IPR020058">
    <property type="entry name" value="Glu/Gln-tRNA-synth_Ib_cat-dom"/>
</dbReference>
<dbReference type="InterPro" id="IPR049940">
    <property type="entry name" value="GluQ/Sye"/>
</dbReference>
<dbReference type="InterPro" id="IPR014729">
    <property type="entry name" value="Rossmann-like_a/b/a_fold"/>
</dbReference>
<dbReference type="NCBIfam" id="NF004312">
    <property type="entry name" value="PRK05710.1-1"/>
    <property type="match status" value="1"/>
</dbReference>
<dbReference type="NCBIfam" id="NF004314">
    <property type="entry name" value="PRK05710.1-3"/>
    <property type="match status" value="1"/>
</dbReference>
<dbReference type="NCBIfam" id="TIGR03838">
    <property type="entry name" value="queuosine_YadB"/>
    <property type="match status" value="1"/>
</dbReference>
<dbReference type="PANTHER" id="PTHR43311">
    <property type="entry name" value="GLUTAMATE--TRNA LIGASE"/>
    <property type="match status" value="1"/>
</dbReference>
<dbReference type="PANTHER" id="PTHR43311:SF1">
    <property type="entry name" value="GLUTAMYL-Q TRNA(ASP) SYNTHETASE"/>
    <property type="match status" value="1"/>
</dbReference>
<dbReference type="Pfam" id="PF00749">
    <property type="entry name" value="tRNA-synt_1c"/>
    <property type="match status" value="1"/>
</dbReference>
<dbReference type="PRINTS" id="PR00987">
    <property type="entry name" value="TRNASYNTHGLU"/>
</dbReference>
<dbReference type="SUPFAM" id="SSF52374">
    <property type="entry name" value="Nucleotidylyl transferase"/>
    <property type="match status" value="1"/>
</dbReference>
<organism>
    <name type="scientific">Serratia proteamaculans (strain 568)</name>
    <dbReference type="NCBI Taxonomy" id="399741"/>
    <lineage>
        <taxon>Bacteria</taxon>
        <taxon>Pseudomonadati</taxon>
        <taxon>Pseudomonadota</taxon>
        <taxon>Gammaproteobacteria</taxon>
        <taxon>Enterobacterales</taxon>
        <taxon>Yersiniaceae</taxon>
        <taxon>Serratia</taxon>
    </lineage>
</organism>
<proteinExistence type="inferred from homology"/>
<keyword id="KW-0030">Aminoacyl-tRNA synthetase</keyword>
<keyword id="KW-0067">ATP-binding</keyword>
<keyword id="KW-0436">Ligase</keyword>
<keyword id="KW-0479">Metal-binding</keyword>
<keyword id="KW-0547">Nucleotide-binding</keyword>
<keyword id="KW-0862">Zinc</keyword>
<protein>
    <recommendedName>
        <fullName evidence="1">Glutamyl-Q tRNA(Asp) synthetase</fullName>
        <shortName evidence="1">Glu-Q-RSs</shortName>
        <ecNumber evidence="1">6.1.1.-</ecNumber>
    </recommendedName>
</protein>
<accession>A8GIZ1</accession>
<gene>
    <name evidence="1" type="primary">gluQ</name>
    <name type="ordered locus">Spro_3986</name>
</gene>
<reference key="1">
    <citation type="submission" date="2007-09" db="EMBL/GenBank/DDBJ databases">
        <title>Complete sequence of chromosome of Serratia proteamaculans 568.</title>
        <authorList>
            <consortium name="US DOE Joint Genome Institute"/>
            <person name="Copeland A."/>
            <person name="Lucas S."/>
            <person name="Lapidus A."/>
            <person name="Barry K."/>
            <person name="Glavina del Rio T."/>
            <person name="Dalin E."/>
            <person name="Tice H."/>
            <person name="Pitluck S."/>
            <person name="Chain P."/>
            <person name="Malfatti S."/>
            <person name="Shin M."/>
            <person name="Vergez L."/>
            <person name="Schmutz J."/>
            <person name="Larimer F."/>
            <person name="Land M."/>
            <person name="Hauser L."/>
            <person name="Kyrpides N."/>
            <person name="Kim E."/>
            <person name="Taghavi S."/>
            <person name="Newman L."/>
            <person name="Vangronsveld J."/>
            <person name="van der Lelie D."/>
            <person name="Richardson P."/>
        </authorList>
    </citation>
    <scope>NUCLEOTIDE SEQUENCE [LARGE SCALE GENOMIC DNA]</scope>
    <source>
        <strain>568</strain>
    </source>
</reference>
<name>GLUQ_SERP5</name>
<evidence type="ECO:0000255" key="1">
    <source>
        <dbReference type="HAMAP-Rule" id="MF_01428"/>
    </source>
</evidence>
<feature type="chain" id="PRO_1000068519" description="Glutamyl-Q tRNA(Asp) synthetase">
    <location>
        <begin position="1"/>
        <end position="303"/>
    </location>
</feature>
<feature type="short sequence motif" description="'HIGH' region">
    <location>
        <begin position="12"/>
        <end position="22"/>
    </location>
</feature>
<feature type="short sequence motif" description="'KMSKS' region">
    <location>
        <begin position="228"/>
        <end position="232"/>
    </location>
</feature>
<feature type="binding site" evidence="1">
    <location>
        <begin position="9"/>
        <end position="13"/>
    </location>
    <ligand>
        <name>L-glutamate</name>
        <dbReference type="ChEBI" id="CHEBI:29985"/>
    </ligand>
</feature>
<feature type="binding site" evidence="1">
    <location>
        <position position="45"/>
    </location>
    <ligand>
        <name>L-glutamate</name>
        <dbReference type="ChEBI" id="CHEBI:29985"/>
    </ligand>
</feature>
<feature type="binding site" evidence="1">
    <location>
        <position position="101"/>
    </location>
    <ligand>
        <name>Zn(2+)</name>
        <dbReference type="ChEBI" id="CHEBI:29105"/>
    </ligand>
</feature>
<feature type="binding site" evidence="1">
    <location>
        <position position="103"/>
    </location>
    <ligand>
        <name>Zn(2+)</name>
        <dbReference type="ChEBI" id="CHEBI:29105"/>
    </ligand>
</feature>
<feature type="binding site" evidence="1">
    <location>
        <position position="115"/>
    </location>
    <ligand>
        <name>Zn(2+)</name>
        <dbReference type="ChEBI" id="CHEBI:29105"/>
    </ligand>
</feature>
<feature type="binding site" evidence="1">
    <location>
        <position position="119"/>
    </location>
    <ligand>
        <name>Zn(2+)</name>
        <dbReference type="ChEBI" id="CHEBI:29105"/>
    </ligand>
</feature>
<feature type="binding site" evidence="1">
    <location>
        <position position="172"/>
    </location>
    <ligand>
        <name>L-glutamate</name>
        <dbReference type="ChEBI" id="CHEBI:29985"/>
    </ligand>
</feature>
<feature type="binding site" evidence="1">
    <location>
        <position position="190"/>
    </location>
    <ligand>
        <name>L-glutamate</name>
        <dbReference type="ChEBI" id="CHEBI:29985"/>
    </ligand>
</feature>
<feature type="binding site" evidence="1">
    <location>
        <position position="231"/>
    </location>
    <ligand>
        <name>ATP</name>
        <dbReference type="ChEBI" id="CHEBI:30616"/>
    </ligand>
</feature>
<sequence length="303" mass="33973">MQERQYVGRFAPSPSGSLHFGSLIAALGSYLQARAQRGQWLVRIEDIDPPREVAGAADRILSALEHYGLLWDGQVIYQSQRHEAYRATLDLLHQQGLSYCCNCTRSRIQQLGGLYDGHCRHLNLGPQGAAIRLRQSTPVYAFHDRLQGELQADPALAREDFIIRRRDGLFAYNLAVVVDDHFQGVTEIVRGADLIEPTVRQIALYHQLQAPVPTYVHLPLALGANGSKLSKQNHAPALPDGDPRPTLVAALKFLRQPLPESWQDLDLSLLLSWAVAHWKLEDVPRREAISLDENTSAFSKEPW</sequence>
<comment type="function">
    <text evidence="1">Catalyzes the tRNA-independent activation of glutamate in presence of ATP and the subsequent transfer of glutamate onto a tRNA(Asp). Glutamate is transferred on the 2-amino-5-(4,5-dihydroxy-2-cyclopenten-1-yl) moiety of the queuosine in the wobble position of the QUC anticodon.</text>
</comment>
<comment type="cofactor">
    <cofactor evidence="1">
        <name>Zn(2+)</name>
        <dbReference type="ChEBI" id="CHEBI:29105"/>
    </cofactor>
    <text evidence="1">Binds 1 zinc ion per subunit.</text>
</comment>
<comment type="similarity">
    <text evidence="1">Belongs to the class-I aminoacyl-tRNA synthetase family. GluQ subfamily.</text>
</comment>